<dbReference type="EMBL" id="CP000577">
    <property type="protein sequence ID" value="ABN77807.1"/>
    <property type="molecule type" value="Genomic_DNA"/>
</dbReference>
<dbReference type="RefSeq" id="WP_002721387.1">
    <property type="nucleotide sequence ID" value="NC_009049.1"/>
</dbReference>
<dbReference type="SMR" id="A3PN91"/>
<dbReference type="GeneID" id="67447817"/>
<dbReference type="KEGG" id="rsh:Rsph17029_2705"/>
<dbReference type="HOGENOM" id="CLU_103507_0_2_5"/>
<dbReference type="GO" id="GO:0022625">
    <property type="term" value="C:cytosolic large ribosomal subunit"/>
    <property type="evidence" value="ECO:0007669"/>
    <property type="project" value="TreeGrafter"/>
</dbReference>
<dbReference type="GO" id="GO:0003735">
    <property type="term" value="F:structural constituent of ribosome"/>
    <property type="evidence" value="ECO:0007669"/>
    <property type="project" value="InterPro"/>
</dbReference>
<dbReference type="GO" id="GO:0006412">
    <property type="term" value="P:translation"/>
    <property type="evidence" value="ECO:0007669"/>
    <property type="project" value="UniProtKB-UniRule"/>
</dbReference>
<dbReference type="FunFam" id="2.30.30.790:FF:000001">
    <property type="entry name" value="50S ribosomal protein L19"/>
    <property type="match status" value="1"/>
</dbReference>
<dbReference type="Gene3D" id="2.30.30.790">
    <property type="match status" value="1"/>
</dbReference>
<dbReference type="HAMAP" id="MF_00402">
    <property type="entry name" value="Ribosomal_bL19"/>
    <property type="match status" value="1"/>
</dbReference>
<dbReference type="InterPro" id="IPR001857">
    <property type="entry name" value="Ribosomal_bL19"/>
</dbReference>
<dbReference type="InterPro" id="IPR018257">
    <property type="entry name" value="Ribosomal_bL19_CS"/>
</dbReference>
<dbReference type="InterPro" id="IPR038657">
    <property type="entry name" value="Ribosomal_bL19_sf"/>
</dbReference>
<dbReference type="InterPro" id="IPR008991">
    <property type="entry name" value="Translation_prot_SH3-like_sf"/>
</dbReference>
<dbReference type="NCBIfam" id="TIGR01024">
    <property type="entry name" value="rplS_bact"/>
    <property type="match status" value="1"/>
</dbReference>
<dbReference type="PANTHER" id="PTHR15680:SF9">
    <property type="entry name" value="LARGE RIBOSOMAL SUBUNIT PROTEIN BL19M"/>
    <property type="match status" value="1"/>
</dbReference>
<dbReference type="PANTHER" id="PTHR15680">
    <property type="entry name" value="RIBOSOMAL PROTEIN L19"/>
    <property type="match status" value="1"/>
</dbReference>
<dbReference type="Pfam" id="PF01245">
    <property type="entry name" value="Ribosomal_L19"/>
    <property type="match status" value="1"/>
</dbReference>
<dbReference type="PIRSF" id="PIRSF002191">
    <property type="entry name" value="Ribosomal_L19"/>
    <property type="match status" value="1"/>
</dbReference>
<dbReference type="PRINTS" id="PR00061">
    <property type="entry name" value="RIBOSOMALL19"/>
</dbReference>
<dbReference type="SUPFAM" id="SSF50104">
    <property type="entry name" value="Translation proteins SH3-like domain"/>
    <property type="match status" value="1"/>
</dbReference>
<dbReference type="PROSITE" id="PS01015">
    <property type="entry name" value="RIBOSOMAL_L19"/>
    <property type="match status" value="1"/>
</dbReference>
<gene>
    <name evidence="1" type="primary">rplS</name>
    <name type="ordered locus">Rsph17029_2705</name>
</gene>
<evidence type="ECO:0000255" key="1">
    <source>
        <dbReference type="HAMAP-Rule" id="MF_00402"/>
    </source>
</evidence>
<evidence type="ECO:0000305" key="2"/>
<reference key="1">
    <citation type="submission" date="2007-02" db="EMBL/GenBank/DDBJ databases">
        <title>Complete sequence of chromosome 1 of Rhodobacter sphaeroides ATCC 17029.</title>
        <authorList>
            <person name="Copeland A."/>
            <person name="Lucas S."/>
            <person name="Lapidus A."/>
            <person name="Barry K."/>
            <person name="Detter J.C."/>
            <person name="Glavina del Rio T."/>
            <person name="Hammon N."/>
            <person name="Israni S."/>
            <person name="Dalin E."/>
            <person name="Tice H."/>
            <person name="Pitluck S."/>
            <person name="Kiss H."/>
            <person name="Brettin T."/>
            <person name="Bruce D."/>
            <person name="Han C."/>
            <person name="Tapia R."/>
            <person name="Gilna P."/>
            <person name="Schmutz J."/>
            <person name="Larimer F."/>
            <person name="Land M."/>
            <person name="Hauser L."/>
            <person name="Kyrpides N."/>
            <person name="Mikhailova N."/>
            <person name="Richardson P."/>
            <person name="Mackenzie C."/>
            <person name="Choudhary M."/>
            <person name="Donohue T.J."/>
            <person name="Kaplan S."/>
        </authorList>
    </citation>
    <scope>NUCLEOTIDE SEQUENCE [LARGE SCALE GENOMIC DNA]</scope>
    <source>
        <strain>ATCC 17029 / ATH 2.4.9</strain>
    </source>
</reference>
<comment type="function">
    <text evidence="1">This protein is located at the 30S-50S ribosomal subunit interface and may play a role in the structure and function of the aminoacyl-tRNA binding site.</text>
</comment>
<comment type="similarity">
    <text evidence="1">Belongs to the bacterial ribosomal protein bL19 family.</text>
</comment>
<feature type="chain" id="PRO_1000049729" description="Large ribosomal subunit protein bL19">
    <location>
        <begin position="1"/>
        <end position="124"/>
    </location>
</feature>
<protein>
    <recommendedName>
        <fullName evidence="1">Large ribosomal subunit protein bL19</fullName>
    </recommendedName>
    <alternativeName>
        <fullName evidence="2">50S ribosomal protein L19</fullName>
    </alternativeName>
</protein>
<proteinExistence type="inferred from homology"/>
<accession>A3PN91</accession>
<keyword id="KW-0687">Ribonucleoprotein</keyword>
<keyword id="KW-0689">Ribosomal protein</keyword>
<name>RL19_CERS1</name>
<sequence>MNLIAQLEAEQIAALGKTIPDFKAGDTVRVGYKVTEGTRSRVQNYEGVVIGRKGGNTISASFTVRKISFGEGVERVFPLYSTNIDSIEVVRRGRVRRAKLYYLRSRRGKSARIAEVTNYKEKSE</sequence>
<organism>
    <name type="scientific">Cereibacter sphaeroides (strain ATCC 17029 / ATH 2.4.9)</name>
    <name type="common">Rhodobacter sphaeroides</name>
    <dbReference type="NCBI Taxonomy" id="349101"/>
    <lineage>
        <taxon>Bacteria</taxon>
        <taxon>Pseudomonadati</taxon>
        <taxon>Pseudomonadota</taxon>
        <taxon>Alphaproteobacteria</taxon>
        <taxon>Rhodobacterales</taxon>
        <taxon>Paracoccaceae</taxon>
        <taxon>Cereibacter</taxon>
    </lineage>
</organism>